<reference key="1">
    <citation type="submission" date="2007-02" db="EMBL/GenBank/DDBJ databases">
        <authorList>
            <consortium name="NIH - Mammalian Gene Collection (MGC) project"/>
        </authorList>
    </citation>
    <scope>NUCLEOTIDE SEQUENCE [LARGE SCALE MRNA]</scope>
    <source>
        <strain>Hereford</strain>
        <tissue>Fetal medulla</tissue>
    </source>
</reference>
<keyword id="KW-0007">Acetylation</keyword>
<keyword id="KW-0963">Cytoplasm</keyword>
<keyword id="KW-0269">Exonuclease</keyword>
<keyword id="KW-0378">Hydrolase</keyword>
<keyword id="KW-0460">Magnesium</keyword>
<keyword id="KW-0464">Manganese</keyword>
<keyword id="KW-0479">Metal-binding</keyword>
<keyword id="KW-0496">Mitochondrion</keyword>
<keyword id="KW-0540">Nuclease</keyword>
<keyword id="KW-0539">Nucleus</keyword>
<keyword id="KW-0597">Phosphoprotein</keyword>
<keyword id="KW-1185">Reference proteome</keyword>
<keyword id="KW-0809">Transit peptide</keyword>
<feature type="transit peptide" description="Mitochondrion" evidence="3">
    <location>
        <begin position="1"/>
        <end position="25"/>
    </location>
</feature>
<feature type="chain" id="PRO_0000297486" description="Oligoribonuclease, mitochondrial">
    <location>
        <begin position="26"/>
        <end position="237"/>
    </location>
</feature>
<feature type="domain" description="Exonuclease">
    <location>
        <begin position="43"/>
        <end position="207"/>
    </location>
</feature>
<feature type="active site" evidence="2">
    <location>
        <position position="194"/>
    </location>
</feature>
<feature type="binding site" evidence="2">
    <location>
        <position position="47"/>
    </location>
    <ligand>
        <name>Mg(2+)</name>
        <dbReference type="ChEBI" id="CHEBI:18420"/>
        <label>1</label>
    </ligand>
</feature>
<feature type="binding site" evidence="2">
    <location>
        <position position="47"/>
    </location>
    <ligand>
        <name>Mg(2+)</name>
        <dbReference type="ChEBI" id="CHEBI:18420"/>
        <label>2</label>
    </ligand>
</feature>
<feature type="binding site" evidence="2">
    <location>
        <position position="49"/>
    </location>
    <ligand>
        <name>Mg(2+)</name>
        <dbReference type="ChEBI" id="CHEBI:18420"/>
        <label>1</label>
    </ligand>
</feature>
<feature type="binding site" evidence="2">
    <location>
        <position position="147"/>
    </location>
    <ligand>
        <name>Mg(2+)</name>
        <dbReference type="ChEBI" id="CHEBI:18420"/>
        <label>2</label>
    </ligand>
</feature>
<feature type="binding site" evidence="2">
    <location>
        <position position="199"/>
    </location>
    <ligand>
        <name>Mg(2+)</name>
        <dbReference type="ChEBI" id="CHEBI:18420"/>
        <label>1</label>
    </ligand>
</feature>
<feature type="site" description="Important for dinucleotide binding" evidence="2">
    <location>
        <position position="53"/>
    </location>
</feature>
<feature type="site" description="Important for dinucleotide binding" evidence="2">
    <location>
        <position position="96"/>
    </location>
</feature>
<feature type="site" description="Important for dinucleotide binding" evidence="2">
    <location>
        <position position="164"/>
    </location>
</feature>
<feature type="modified residue" description="Phosphoserine" evidence="2">
    <location>
        <position position="92"/>
    </location>
</feature>
<feature type="modified residue" description="Phosphotyrosine" evidence="2">
    <location>
        <position position="122"/>
    </location>
</feature>
<feature type="modified residue" description="N6-acetyllysine" evidence="1">
    <location>
        <position position="173"/>
    </location>
</feature>
<evidence type="ECO:0000250" key="1">
    <source>
        <dbReference type="UniProtKB" id="Q9D8S4"/>
    </source>
</evidence>
<evidence type="ECO:0000250" key="2">
    <source>
        <dbReference type="UniProtKB" id="Q9Y3B8"/>
    </source>
</evidence>
<evidence type="ECO:0000255" key="3"/>
<evidence type="ECO:0000305" key="4"/>
<name>ORN_BOVIN</name>
<comment type="function">
    <text evidence="1 2">3'-to-5'exoribonuclease that preferentially degrades DNA and RNA oligonucleotides composed of only two nucleotides (By similarity). Binds and degrades longer oligonucleotides with a lower affinity (By similarity). Plays dual roles in mitochondria, scavenging nanoRNAs (small RNA oligonucleotides of &lt;5 nucleotides) that are produced by the degradosome and clearing short RNAs that are generated by RNA processing (By similarity). Essential for correct initiation of mitochondrial transcription, degrading mitochondrial RNA dinucleotides to prevent RNA-primed transcription at non-canonical sites in the mitochondrial genome (By similarity). Essential for embryonic development (By similarity).</text>
</comment>
<comment type="cofactor">
    <cofactor evidence="2">
        <name>Mn(2+)</name>
        <dbReference type="ChEBI" id="CHEBI:29035"/>
    </cofactor>
    <cofactor evidence="2">
        <name>Mg(2+)</name>
        <dbReference type="ChEBI" id="CHEBI:18420"/>
    </cofactor>
</comment>
<comment type="subunit">
    <text evidence="2">Homodimer (By similarity). Homotetramer (By similarity).</text>
</comment>
<comment type="subcellular location">
    <subcellularLocation>
        <location evidence="2">Mitochondrion intermembrane space</location>
    </subcellularLocation>
    <subcellularLocation>
        <location evidence="2">Mitochondrion matrix</location>
    </subcellularLocation>
    <subcellularLocation>
        <location evidence="2">Mitochondrion</location>
    </subcellularLocation>
    <subcellularLocation>
        <location evidence="2">Cytoplasm</location>
    </subcellularLocation>
    <subcellularLocation>
        <location evidence="2">Nucleus</location>
    </subcellularLocation>
</comment>
<comment type="similarity">
    <text evidence="4">Belongs to the oligoribonuclease family.</text>
</comment>
<accession>A2VE52</accession>
<protein>
    <recommendedName>
        <fullName>Oligoribonuclease, mitochondrial</fullName>
        <ecNumber>3.1.15.-</ecNumber>
    </recommendedName>
    <alternativeName>
        <fullName>RNA exonuclease 2 homolog</fullName>
    </alternativeName>
    <alternativeName>
        <fullName>Small fragment nuclease</fullName>
    </alternativeName>
</protein>
<sequence>MLGGSLGSRLLRGVGGTRGQFRARGVREGGAAMAAGESMAQRMVWVDLEMTGLDIEKDQIIEMACLITDSDLNILAEGPNLIIKQPDELLDSMSDWCKEHHGKSGLTKAVKESTMTLQQAEYEFLSFVRQQTPPGLCPLAGNSVHADKKFLDKYMPQFMKHLHYRIIDVSTVKELCRRWYPEEYEFAPKKAASHRALDDISESIKELQFYRNNIFKKKTDEKKRKIIENGENEKTVS</sequence>
<proteinExistence type="evidence at transcript level"/>
<gene>
    <name type="primary">REXO2</name>
</gene>
<organism>
    <name type="scientific">Bos taurus</name>
    <name type="common">Bovine</name>
    <dbReference type="NCBI Taxonomy" id="9913"/>
    <lineage>
        <taxon>Eukaryota</taxon>
        <taxon>Metazoa</taxon>
        <taxon>Chordata</taxon>
        <taxon>Craniata</taxon>
        <taxon>Vertebrata</taxon>
        <taxon>Euteleostomi</taxon>
        <taxon>Mammalia</taxon>
        <taxon>Eutheria</taxon>
        <taxon>Laurasiatheria</taxon>
        <taxon>Artiodactyla</taxon>
        <taxon>Ruminantia</taxon>
        <taxon>Pecora</taxon>
        <taxon>Bovidae</taxon>
        <taxon>Bovinae</taxon>
        <taxon>Bos</taxon>
    </lineage>
</organism>
<dbReference type="EC" id="3.1.15.-"/>
<dbReference type="EMBL" id="BC133575">
    <property type="protein sequence ID" value="AAI33576.1"/>
    <property type="molecule type" value="mRNA"/>
</dbReference>
<dbReference type="RefSeq" id="NP_001075204.1">
    <property type="nucleotide sequence ID" value="NM_001081735.2"/>
</dbReference>
<dbReference type="SMR" id="A2VE52"/>
<dbReference type="FunCoup" id="A2VE52">
    <property type="interactions" value="2960"/>
</dbReference>
<dbReference type="STRING" id="9913.ENSBTAP00000007680"/>
<dbReference type="PaxDb" id="9913-ENSBTAP00000007680"/>
<dbReference type="PeptideAtlas" id="A2VE52"/>
<dbReference type="Ensembl" id="ENSBTAT00000007680.6">
    <property type="protein sequence ID" value="ENSBTAP00000007680.4"/>
    <property type="gene ID" value="ENSBTAG00000005843.6"/>
</dbReference>
<dbReference type="GeneID" id="540139"/>
<dbReference type="KEGG" id="bta:540139"/>
<dbReference type="CTD" id="25996"/>
<dbReference type="VEuPathDB" id="HostDB:ENSBTAG00000005843"/>
<dbReference type="VGNC" id="VGNC:33884">
    <property type="gene designation" value="REXO2"/>
</dbReference>
<dbReference type="eggNOG" id="KOG3242">
    <property type="taxonomic scope" value="Eukaryota"/>
</dbReference>
<dbReference type="GeneTree" id="ENSGT00390000009255"/>
<dbReference type="HOGENOM" id="CLU_064761_1_1_1"/>
<dbReference type="InParanoid" id="A2VE52"/>
<dbReference type="OMA" id="AFFHYRN"/>
<dbReference type="OrthoDB" id="270189at2759"/>
<dbReference type="TreeFam" id="TF314084"/>
<dbReference type="Proteomes" id="UP000009136">
    <property type="component" value="Chromosome 15"/>
</dbReference>
<dbReference type="Bgee" id="ENSBTAG00000005843">
    <property type="expression patterns" value="Expressed in oocyte and 104 other cell types or tissues"/>
</dbReference>
<dbReference type="GO" id="GO:0005737">
    <property type="term" value="C:cytoplasm"/>
    <property type="evidence" value="ECO:0000250"/>
    <property type="project" value="UniProtKB"/>
</dbReference>
<dbReference type="GO" id="GO:0005925">
    <property type="term" value="C:focal adhesion"/>
    <property type="evidence" value="ECO:0007669"/>
    <property type="project" value="Ensembl"/>
</dbReference>
<dbReference type="GO" id="GO:0005758">
    <property type="term" value="C:mitochondrial intermembrane space"/>
    <property type="evidence" value="ECO:0000250"/>
    <property type="project" value="UniProtKB"/>
</dbReference>
<dbReference type="GO" id="GO:0005759">
    <property type="term" value="C:mitochondrial matrix"/>
    <property type="evidence" value="ECO:0000250"/>
    <property type="project" value="UniProtKB"/>
</dbReference>
<dbReference type="GO" id="GO:0005739">
    <property type="term" value="C:mitochondrion"/>
    <property type="evidence" value="ECO:0000250"/>
    <property type="project" value="UniProtKB"/>
</dbReference>
<dbReference type="GO" id="GO:0005730">
    <property type="term" value="C:nucleolus"/>
    <property type="evidence" value="ECO:0007669"/>
    <property type="project" value="Ensembl"/>
</dbReference>
<dbReference type="GO" id="GO:0005634">
    <property type="term" value="C:nucleus"/>
    <property type="evidence" value="ECO:0000250"/>
    <property type="project" value="UniProtKB"/>
</dbReference>
<dbReference type="GO" id="GO:0008408">
    <property type="term" value="F:3'-5' exonuclease activity"/>
    <property type="evidence" value="ECO:0000250"/>
    <property type="project" value="UniProtKB"/>
</dbReference>
<dbReference type="GO" id="GO:0008296">
    <property type="term" value="F:3'-5'-DNA exonuclease activity"/>
    <property type="evidence" value="ECO:0000250"/>
    <property type="project" value="UniProtKB"/>
</dbReference>
<dbReference type="GO" id="GO:0000175">
    <property type="term" value="F:3'-5'-RNA exonuclease activity"/>
    <property type="evidence" value="ECO:0000318"/>
    <property type="project" value="GO_Central"/>
</dbReference>
<dbReference type="GO" id="GO:0000287">
    <property type="term" value="F:magnesium ion binding"/>
    <property type="evidence" value="ECO:0000250"/>
    <property type="project" value="UniProtKB"/>
</dbReference>
<dbReference type="GO" id="GO:0003676">
    <property type="term" value="F:nucleic acid binding"/>
    <property type="evidence" value="ECO:0007669"/>
    <property type="project" value="InterPro"/>
</dbReference>
<dbReference type="CDD" id="cd06135">
    <property type="entry name" value="Orn"/>
    <property type="match status" value="1"/>
</dbReference>
<dbReference type="FunFam" id="3.30.420.10:FF:000003">
    <property type="entry name" value="Oligoribonuclease"/>
    <property type="match status" value="1"/>
</dbReference>
<dbReference type="Gene3D" id="3.30.420.10">
    <property type="entry name" value="Ribonuclease H-like superfamily/Ribonuclease H"/>
    <property type="match status" value="1"/>
</dbReference>
<dbReference type="HAMAP" id="MF_00045">
    <property type="entry name" value="Oligoribonuclease"/>
    <property type="match status" value="1"/>
</dbReference>
<dbReference type="InterPro" id="IPR013520">
    <property type="entry name" value="Exonuclease_RNaseT/DNA_pol3"/>
</dbReference>
<dbReference type="InterPro" id="IPR022894">
    <property type="entry name" value="Oligoribonuclease"/>
</dbReference>
<dbReference type="InterPro" id="IPR012337">
    <property type="entry name" value="RNaseH-like_sf"/>
</dbReference>
<dbReference type="InterPro" id="IPR036397">
    <property type="entry name" value="RNaseH_sf"/>
</dbReference>
<dbReference type="NCBIfam" id="NF003765">
    <property type="entry name" value="PRK05359.1"/>
    <property type="match status" value="1"/>
</dbReference>
<dbReference type="PANTHER" id="PTHR11046">
    <property type="entry name" value="OLIGORIBONUCLEASE, MITOCHONDRIAL"/>
    <property type="match status" value="1"/>
</dbReference>
<dbReference type="PANTHER" id="PTHR11046:SF0">
    <property type="entry name" value="OLIGORIBONUCLEASE, MITOCHONDRIAL"/>
    <property type="match status" value="1"/>
</dbReference>
<dbReference type="Pfam" id="PF00929">
    <property type="entry name" value="RNase_T"/>
    <property type="match status" value="1"/>
</dbReference>
<dbReference type="SMART" id="SM00479">
    <property type="entry name" value="EXOIII"/>
    <property type="match status" value="1"/>
</dbReference>
<dbReference type="SUPFAM" id="SSF53098">
    <property type="entry name" value="Ribonuclease H-like"/>
    <property type="match status" value="1"/>
</dbReference>